<organism>
    <name type="scientific">Chaetomium globosum (strain ATCC 6205 / CBS 148.51 / DSM 1962 / NBRC 6347 / NRRL 1970)</name>
    <name type="common">Soil fungus</name>
    <dbReference type="NCBI Taxonomy" id="306901"/>
    <lineage>
        <taxon>Eukaryota</taxon>
        <taxon>Fungi</taxon>
        <taxon>Dikarya</taxon>
        <taxon>Ascomycota</taxon>
        <taxon>Pezizomycotina</taxon>
        <taxon>Sordariomycetes</taxon>
        <taxon>Sordariomycetidae</taxon>
        <taxon>Sordariales</taxon>
        <taxon>Chaetomiaceae</taxon>
        <taxon>Chaetomium</taxon>
    </lineage>
</organism>
<dbReference type="EMBL" id="CH408032">
    <property type="protein sequence ID" value="EAQ88230.1"/>
    <property type="molecule type" value="Genomic_DNA"/>
</dbReference>
<dbReference type="RefSeq" id="XP_001224063.1">
    <property type="nucleotide sequence ID" value="XM_001224062.1"/>
</dbReference>
<dbReference type="SMR" id="Q2H047"/>
<dbReference type="FunCoup" id="Q2H047">
    <property type="interactions" value="603"/>
</dbReference>
<dbReference type="STRING" id="306901.Q2H047"/>
<dbReference type="GeneID" id="4391845"/>
<dbReference type="VEuPathDB" id="FungiDB:CHGG_04849"/>
<dbReference type="eggNOG" id="KOG3364">
    <property type="taxonomic scope" value="Eukaryota"/>
</dbReference>
<dbReference type="HOGENOM" id="CLU_104368_2_0_1"/>
<dbReference type="InParanoid" id="Q2H047"/>
<dbReference type="OMA" id="QFNYAWG"/>
<dbReference type="OrthoDB" id="421154at2759"/>
<dbReference type="Proteomes" id="UP000001056">
    <property type="component" value="Unassembled WGS sequence"/>
</dbReference>
<dbReference type="GO" id="GO:0005741">
    <property type="term" value="C:mitochondrial outer membrane"/>
    <property type="evidence" value="ECO:0007669"/>
    <property type="project" value="UniProtKB-SubCell"/>
</dbReference>
<dbReference type="GO" id="GO:0005778">
    <property type="term" value="C:peroxisomal membrane"/>
    <property type="evidence" value="ECO:0007669"/>
    <property type="project" value="TreeGrafter"/>
</dbReference>
<dbReference type="GO" id="GO:0000422">
    <property type="term" value="P:autophagy of mitochondrion"/>
    <property type="evidence" value="ECO:0007669"/>
    <property type="project" value="TreeGrafter"/>
</dbReference>
<dbReference type="GO" id="GO:0000266">
    <property type="term" value="P:mitochondrial fission"/>
    <property type="evidence" value="ECO:0007669"/>
    <property type="project" value="InterPro"/>
</dbReference>
<dbReference type="GO" id="GO:0016559">
    <property type="term" value="P:peroxisome fission"/>
    <property type="evidence" value="ECO:0007669"/>
    <property type="project" value="TreeGrafter"/>
</dbReference>
<dbReference type="CDD" id="cd12212">
    <property type="entry name" value="Fis1"/>
    <property type="match status" value="1"/>
</dbReference>
<dbReference type="FunFam" id="1.25.40.10:FF:000179">
    <property type="entry name" value="Mitochondrial fission 1 protein"/>
    <property type="match status" value="1"/>
</dbReference>
<dbReference type="Gene3D" id="1.25.40.10">
    <property type="entry name" value="Tetratricopeptide repeat domain"/>
    <property type="match status" value="1"/>
</dbReference>
<dbReference type="InterPro" id="IPR016543">
    <property type="entry name" value="Fis1"/>
</dbReference>
<dbReference type="InterPro" id="IPR033745">
    <property type="entry name" value="Fis1_cytosol"/>
</dbReference>
<dbReference type="InterPro" id="IPR028061">
    <property type="entry name" value="Fis1_TPR_C"/>
</dbReference>
<dbReference type="InterPro" id="IPR028058">
    <property type="entry name" value="Fis1_TPR_N"/>
</dbReference>
<dbReference type="InterPro" id="IPR011990">
    <property type="entry name" value="TPR-like_helical_dom_sf"/>
</dbReference>
<dbReference type="PANTHER" id="PTHR13247:SF0">
    <property type="entry name" value="MITOCHONDRIAL FISSION 1 PROTEIN"/>
    <property type="match status" value="1"/>
</dbReference>
<dbReference type="PANTHER" id="PTHR13247">
    <property type="entry name" value="TETRATRICOPEPTIDE REPEAT PROTEIN 11 TPR REPEAT PROTEIN 11"/>
    <property type="match status" value="1"/>
</dbReference>
<dbReference type="Pfam" id="PF14853">
    <property type="entry name" value="Fis1_TPR_C"/>
    <property type="match status" value="1"/>
</dbReference>
<dbReference type="Pfam" id="PF14852">
    <property type="entry name" value="Fis1_TPR_N"/>
    <property type="match status" value="1"/>
</dbReference>
<dbReference type="PIRSF" id="PIRSF008835">
    <property type="entry name" value="TPR_repeat_11_Fis1"/>
    <property type="match status" value="1"/>
</dbReference>
<dbReference type="SUPFAM" id="SSF48452">
    <property type="entry name" value="TPR-like"/>
    <property type="match status" value="1"/>
</dbReference>
<accession>Q2H047</accession>
<protein>
    <recommendedName>
        <fullName>Mitochondrial fission 1 protein</fullName>
    </recommendedName>
</protein>
<evidence type="ECO:0000250" key="1"/>
<evidence type="ECO:0000255" key="2"/>
<evidence type="ECO:0000305" key="3"/>
<gene>
    <name type="primary">FIS1</name>
    <name type="ORF">CHGG_04849</name>
</gene>
<keyword id="KW-0472">Membrane</keyword>
<keyword id="KW-0496">Mitochondrion</keyword>
<keyword id="KW-1000">Mitochondrion outer membrane</keyword>
<keyword id="KW-1185">Reference proteome</keyword>
<keyword id="KW-0677">Repeat</keyword>
<keyword id="KW-0802">TPR repeat</keyword>
<keyword id="KW-0812">Transmembrane</keyword>
<keyword id="KW-1133">Transmembrane helix</keyword>
<proteinExistence type="inferred from homology"/>
<feature type="chain" id="PRO_0000256182" description="Mitochondrial fission 1 protein">
    <location>
        <begin position="1"/>
        <end position="160"/>
    </location>
</feature>
<feature type="topological domain" description="Cytoplasmic" evidence="2">
    <location>
        <begin position="1"/>
        <end position="124"/>
    </location>
</feature>
<feature type="transmembrane region" description="Helical" evidence="2">
    <location>
        <begin position="125"/>
        <end position="145"/>
    </location>
</feature>
<feature type="topological domain" description="Mitochondrial intermembrane" evidence="2">
    <location>
        <begin position="146"/>
        <end position="160"/>
    </location>
</feature>
<feature type="repeat" description="TPR">
    <location>
        <begin position="73"/>
        <end position="106"/>
    </location>
</feature>
<name>FIS1_CHAGB</name>
<sequence>MAQLPYAIDAETPLNPAELAVLRAQYEREGDMVGLQTKFNYAWVKLNFAPLMEQQLGVMLLAEIFRVSTERRRECLYYLGLGNYKLGNYGDARKYNDILLSKEPGNLQALNLQSLIDEKVAKEGLMGVAIVSGVAVVAGIVGECAAPEFGAEEVKTTLLH</sequence>
<comment type="function">
    <text evidence="1">Has a role in mitochondrial fission. Has a role in outer membrane fission but not matrix separation (By similarity).</text>
</comment>
<comment type="subcellular location">
    <subcellularLocation>
        <location evidence="1">Mitochondrion outer membrane</location>
        <topology evidence="1">Single-pass membrane protein</topology>
    </subcellularLocation>
</comment>
<comment type="domain">
    <text evidence="1">The C-terminus is required for mitochondrial localization, while the N-terminus is necessary for mitochondrial fission.</text>
</comment>
<comment type="similarity">
    <text evidence="3">Belongs to the FIS1 family.</text>
</comment>
<reference key="1">
    <citation type="journal article" date="2015" name="Genome Announc.">
        <title>Draft genome sequence of the cellulolytic fungus Chaetomium globosum.</title>
        <authorList>
            <person name="Cuomo C.A."/>
            <person name="Untereiner W.A."/>
            <person name="Ma L.-J."/>
            <person name="Grabherr M."/>
            <person name="Birren B.W."/>
        </authorList>
    </citation>
    <scope>NUCLEOTIDE SEQUENCE [LARGE SCALE GENOMIC DNA]</scope>
    <source>
        <strain>ATCC 6205 / CBS 148.51 / DSM 1962 / NBRC 6347 / NRRL 1970</strain>
    </source>
</reference>